<keyword id="KW-0002">3D-structure</keyword>
<keyword id="KW-0046">Antibiotic resistance</keyword>
<keyword id="KW-0489">Methyltransferase</keyword>
<keyword id="KW-0949">S-adenosyl-L-methionine</keyword>
<keyword id="KW-0808">Transferase</keyword>
<proteinExistence type="evidence at protein level"/>
<feature type="chain" id="PRO_0000065669" description="23S rRNA (adenosine(1067)-2'-O)-methyltransferase">
    <location>
        <begin position="1"/>
        <end position="269"/>
    </location>
</feature>
<feature type="binding site" evidence="1 7">
    <location>
        <position position="135"/>
    </location>
    <ligand>
        <name>S-adenosyl-L-methionine</name>
        <dbReference type="ChEBI" id="CHEBI:59789"/>
    </ligand>
</feature>
<feature type="binding site" evidence="1 7">
    <location>
        <position position="165"/>
    </location>
    <ligand>
        <name>S-adenosyl-L-methionine</name>
        <dbReference type="ChEBI" id="CHEBI:59789"/>
    </ligand>
</feature>
<feature type="binding site" evidence="1 7">
    <location>
        <position position="195"/>
    </location>
    <ligand>
        <name>S-adenosyl-L-methionine</name>
        <dbReference type="ChEBI" id="CHEBI:59789"/>
    </ligand>
</feature>
<feature type="binding site" evidence="1 7">
    <location>
        <position position="218"/>
    </location>
    <ligand>
        <name>S-adenosyl-L-methionine</name>
        <dbReference type="ChEBI" id="CHEBI:59789"/>
    </ligand>
</feature>
<feature type="binding site" evidence="1 7">
    <location>
        <position position="238"/>
    </location>
    <ligand>
        <name>S-adenosyl-L-methionine</name>
        <dbReference type="ChEBI" id="CHEBI:59789"/>
    </ligand>
</feature>
<feature type="binding site" evidence="1 7">
    <location>
        <position position="247"/>
    </location>
    <ligand>
        <name>S-adenosyl-L-methionine</name>
        <dbReference type="ChEBI" id="CHEBI:59789"/>
    </ligand>
</feature>
<feature type="mutagenesis site" description="Defective in RNA binding." evidence="1">
    <original>F</original>
    <variation>A</variation>
    <location>
        <position position="88"/>
    </location>
</feature>
<feature type="helix" evidence="8">
    <location>
        <begin position="16"/>
        <end position="18"/>
    </location>
</feature>
<feature type="helix" evidence="8">
    <location>
        <begin position="19"/>
        <end position="22"/>
    </location>
</feature>
<feature type="strand" evidence="8">
    <location>
        <begin position="23"/>
        <end position="25"/>
    </location>
</feature>
<feature type="strand" evidence="8">
    <location>
        <begin position="30"/>
        <end position="34"/>
    </location>
</feature>
<feature type="helix" evidence="8">
    <location>
        <begin position="37"/>
        <end position="44"/>
    </location>
</feature>
<feature type="turn" evidence="8">
    <location>
        <begin position="45"/>
        <end position="47"/>
    </location>
</feature>
<feature type="strand" evidence="8">
    <location>
        <begin position="49"/>
        <end position="59"/>
    </location>
</feature>
<feature type="turn" evidence="8">
    <location>
        <begin position="63"/>
        <end position="66"/>
    </location>
</feature>
<feature type="helix" evidence="8">
    <location>
        <begin position="67"/>
        <end position="70"/>
    </location>
</feature>
<feature type="turn" evidence="8">
    <location>
        <begin position="71"/>
        <end position="73"/>
    </location>
</feature>
<feature type="strand" evidence="8">
    <location>
        <begin position="76"/>
        <end position="79"/>
    </location>
</feature>
<feature type="helix" evidence="8">
    <location>
        <begin position="81"/>
        <end position="84"/>
    </location>
</feature>
<feature type="turn" evidence="8">
    <location>
        <begin position="85"/>
        <end position="87"/>
    </location>
</feature>
<feature type="strand" evidence="8">
    <location>
        <begin position="96"/>
        <end position="101"/>
    </location>
</feature>
<feature type="helix" evidence="8">
    <location>
        <begin position="108"/>
        <end position="113"/>
    </location>
</feature>
<feature type="strand" evidence="8">
    <location>
        <begin position="118"/>
        <end position="123"/>
    </location>
</feature>
<feature type="helix" evidence="8">
    <location>
        <begin position="127"/>
        <end position="139"/>
    </location>
</feature>
<feature type="strand" evidence="8">
    <location>
        <begin position="143"/>
        <end position="149"/>
    </location>
</feature>
<feature type="helix" evidence="8">
    <location>
        <begin position="158"/>
        <end position="163"/>
    </location>
</feature>
<feature type="turn" evidence="8">
    <location>
        <begin position="164"/>
        <end position="166"/>
    </location>
</feature>
<feature type="helix" evidence="8">
    <location>
        <begin position="167"/>
        <end position="169"/>
    </location>
</feature>
<feature type="strand" evidence="8">
    <location>
        <begin position="173"/>
        <end position="176"/>
    </location>
</feature>
<feature type="helix" evidence="8">
    <location>
        <begin position="178"/>
        <end position="186"/>
    </location>
</feature>
<feature type="turn" evidence="8">
    <location>
        <begin position="187"/>
        <end position="189"/>
    </location>
</feature>
<feature type="strand" evidence="8">
    <location>
        <begin position="191"/>
        <end position="195"/>
    </location>
</feature>
<feature type="strand" evidence="8">
    <location>
        <begin position="200"/>
        <end position="202"/>
    </location>
</feature>
<feature type="helix" evidence="8">
    <location>
        <begin position="203"/>
        <end position="208"/>
    </location>
</feature>
<feature type="strand" evidence="8">
    <location>
        <begin position="213"/>
        <end position="220"/>
    </location>
</feature>
<feature type="helix" evidence="8">
    <location>
        <begin position="226"/>
        <end position="228"/>
    </location>
</feature>
<feature type="turn" evidence="8">
    <location>
        <begin position="229"/>
        <end position="231"/>
    </location>
</feature>
<feature type="strand" evidence="8">
    <location>
        <begin position="234"/>
        <end position="237"/>
    </location>
</feature>
<feature type="helix" evidence="8">
    <location>
        <begin position="249"/>
        <end position="258"/>
    </location>
</feature>
<feature type="helix" evidence="8">
    <location>
        <begin position="261"/>
        <end position="264"/>
    </location>
</feature>
<reference key="1">
    <citation type="journal article" date="1985" name="Mol. Gen. Genet.">
        <title>Nucleotide sequences encoding and promoting expression of three antibiotic resistance genes indigenous to Streptomyces.</title>
        <authorList>
            <person name="Bibb M.J."/>
            <person name="Bibb M.J."/>
            <person name="Ward J.M."/>
            <person name="Cohen S.N."/>
        </authorList>
    </citation>
    <scope>NUCLEOTIDE SEQUENCE [GENOMIC DNA]</scope>
    <source>
        <strain>ATCC 14921 / DSM 40106 / CBS 467.68 / ETH 28555 / JCM 4564 / NBRC 12744 / NRRL B-2655 / VKM Ac-719</strain>
    </source>
</reference>
<reference key="2">
    <citation type="journal article" date="1990" name="Mol. Gen. Genet.">
        <title>Tandem promoters, tsrp1 and tsrp2, direct transcription of the thiostrepton resistance gene (tsr) of Streptomyces azureus: transcriptional initiation from tsrp2 occurs after deletion of the -35 region.</title>
        <authorList>
            <person name="Janssen G.R."/>
            <person name="Bibb M.J."/>
        </authorList>
    </citation>
    <scope>NUCLEOTIDE SEQUENCE [GENOMIC DNA] OF 1-22</scope>
    <source>
        <strain>ATCC 14921 / DSM 40106 / CBS 467.68 / ETH 28555 / JCM 4564 / NBRC 12744 / NRRL B-2655 / VKM Ac-719</strain>
    </source>
</reference>
<reference key="3">
    <citation type="journal article" date="1981" name="J. Gen. Microbiol.">
        <title>Purification and properties of an RNA methylase produced by Streptomyces azureus and involved in resistance to thiostrepton.</title>
        <authorList>
            <person name="Thompson J."/>
            <person name="Cundliffe E."/>
        </authorList>
    </citation>
    <scope>FUNCTION</scope>
    <scope>BIOPHYSICOCHEMICAL PROPERTIES</scope>
</reference>
<reference key="4">
    <citation type="journal article" date="1982" name="J. Biol. Chem.">
        <title>Site of action of a ribosomal RNA methylase conferring resistance to thiostrepton.</title>
        <authorList>
            <person name="Thompson J."/>
            <person name="Schmidt F."/>
            <person name="Cundliffe E."/>
        </authorList>
    </citation>
    <scope>FUNCTION</scope>
    <scope>CATALYTIC ACTIVITY</scope>
</reference>
<reference evidence="7" key="5">
    <citation type="journal article" date="2009" name="J. Biol. Chem.">
        <title>Structure of the thiostrepton resistance methyltransferase.S-adenosyl-L-methionine complex and its interaction with ribosomal RNA.</title>
        <authorList>
            <person name="Dunstan M.S."/>
            <person name="Hang P.C."/>
            <person name="Zelinskaya N.V."/>
            <person name="Honek J.F."/>
            <person name="Conn G.L."/>
        </authorList>
    </citation>
    <scope>X-RAY CRYSTALLOGRAPHY (2.45 ANGSTROMS) IN COMPLEX WITH S-ADENOSYL-L-METHIONINE</scope>
    <scope>SUBUNIT</scope>
    <scope>MUTAGENESIS OF PHE-88</scope>
</reference>
<gene>
    <name type="primary">tsnR</name>
    <name evidence="4" type="synonym">tsr</name>
</gene>
<protein>
    <recommendedName>
        <fullName evidence="6">23S rRNA (adenosine(1067)-2'-O)-methyltransferase</fullName>
        <ecNumber evidence="2">2.1.1.230</ecNumber>
    </recommendedName>
    <alternativeName>
        <fullName>23S rRNA [AM1067] 2'-O-methyltransferase</fullName>
        <shortName>23S rRNA methylase</shortName>
    </alternativeName>
    <alternativeName>
        <fullName evidence="5">Thiostrepton-resistance methylase</fullName>
    </alternativeName>
    <alternativeName>
        <fullName>rRNA (adenosine-2'-O)-methyltransferase</fullName>
    </alternativeName>
</protein>
<name>TSNR_STRAJ</name>
<evidence type="ECO:0000269" key="1">
    <source>
    </source>
</evidence>
<evidence type="ECO:0000269" key="2">
    <source>
    </source>
</evidence>
<evidence type="ECO:0000269" key="3">
    <source ref="3"/>
</evidence>
<evidence type="ECO:0000303" key="4">
    <source>
    </source>
</evidence>
<evidence type="ECO:0000303" key="5">
    <source ref="3"/>
</evidence>
<evidence type="ECO:0000305" key="6"/>
<evidence type="ECO:0007744" key="7">
    <source>
        <dbReference type="PDB" id="3GYQ"/>
    </source>
</evidence>
<evidence type="ECO:0007829" key="8">
    <source>
        <dbReference type="PDB" id="3GYQ"/>
    </source>
</evidence>
<sequence length="269" mass="28901">MTELDTIANPSDPAVQRIIDVTKPSRSNIKTTLIEDVEPLMHSIAAGVEFIEVYGSDSSPFPSELLDLCGRQNIPVRLIDSSIVNQLFKGERKAKTFGIARVPRPARFGDIASRRGDVVVLDGVKIVGNIGAIVRTSLALGASGIILVDSDITSIADRRLQRASRGYVFSLPVVLSGREEAIAFIRDSGMQLMTLKADGDISVKELGDNPDRLALLFGSEKGGPSDLFEEASSASVSIPMMSQTESLNVSVSLGIALHERIDRNLAANR</sequence>
<dbReference type="EC" id="2.1.1.230" evidence="2"/>
<dbReference type="EMBL" id="X02392">
    <property type="protein sequence ID" value="CAA26234.1"/>
    <property type="molecule type" value="Genomic_DNA"/>
</dbReference>
<dbReference type="EMBL" id="X54219">
    <property type="protein sequence ID" value="CAA38132.1"/>
    <property type="molecule type" value="Genomic_DNA"/>
</dbReference>
<dbReference type="PIR" id="S28369">
    <property type="entry name" value="S28369"/>
</dbReference>
<dbReference type="PDB" id="3GYQ">
    <property type="method" value="X-ray"/>
    <property type="resolution" value="2.45 A"/>
    <property type="chains" value="A/B=1-269"/>
</dbReference>
<dbReference type="PDBsum" id="3GYQ"/>
<dbReference type="SMR" id="P18644"/>
<dbReference type="OrthoDB" id="9785673at2"/>
<dbReference type="BioCyc" id="MetaCyc:MONOMER-16697"/>
<dbReference type="BRENDA" id="2.1.1.230">
    <property type="organism ID" value="5982"/>
</dbReference>
<dbReference type="EvolutionaryTrace" id="P18644"/>
<dbReference type="GO" id="GO:0030743">
    <property type="term" value="F:23S rRNA (adenosine(1067)-2'-O)-methyltransferase activity"/>
    <property type="evidence" value="ECO:0007669"/>
    <property type="project" value="UniProtKB-EC"/>
</dbReference>
<dbReference type="GO" id="GO:0003723">
    <property type="term" value="F:RNA binding"/>
    <property type="evidence" value="ECO:0007669"/>
    <property type="project" value="InterPro"/>
</dbReference>
<dbReference type="GO" id="GO:0046677">
    <property type="term" value="P:response to antibiotic"/>
    <property type="evidence" value="ECO:0007669"/>
    <property type="project" value="UniProtKB-KW"/>
</dbReference>
<dbReference type="CDD" id="cd18108">
    <property type="entry name" value="SpoU-like_NHR"/>
    <property type="match status" value="1"/>
</dbReference>
<dbReference type="Gene3D" id="3.30.1330.30">
    <property type="match status" value="1"/>
</dbReference>
<dbReference type="Gene3D" id="3.40.1280.10">
    <property type="match status" value="1"/>
</dbReference>
<dbReference type="InterPro" id="IPR029028">
    <property type="entry name" value="Alpha/beta_knot_MTases"/>
</dbReference>
<dbReference type="InterPro" id="IPR029064">
    <property type="entry name" value="Ribosomal_eL30-like_sf"/>
</dbReference>
<dbReference type="InterPro" id="IPR051259">
    <property type="entry name" value="rRNA_Methyltransferase"/>
</dbReference>
<dbReference type="InterPro" id="IPR001537">
    <property type="entry name" value="SpoU_MeTrfase"/>
</dbReference>
<dbReference type="InterPro" id="IPR006795">
    <property type="entry name" value="Thiostrepton-R_Mease_TSNR_N"/>
</dbReference>
<dbReference type="InterPro" id="IPR029026">
    <property type="entry name" value="tRNA_m1G_MTases_N"/>
</dbReference>
<dbReference type="NCBIfam" id="NF000477">
    <property type="entry name" value="NshR_TsnR"/>
    <property type="match status" value="1"/>
</dbReference>
<dbReference type="PANTHER" id="PTHR43191">
    <property type="entry name" value="RRNA METHYLTRANSFERASE 3"/>
    <property type="match status" value="1"/>
</dbReference>
<dbReference type="PANTHER" id="PTHR43191:SF2">
    <property type="entry name" value="RRNA METHYLTRANSFERASE 3, MITOCHONDRIAL"/>
    <property type="match status" value="1"/>
</dbReference>
<dbReference type="Pfam" id="PF00588">
    <property type="entry name" value="SpoU_methylase"/>
    <property type="match status" value="1"/>
</dbReference>
<dbReference type="Pfam" id="PF04705">
    <property type="entry name" value="TSNR_N"/>
    <property type="match status" value="1"/>
</dbReference>
<dbReference type="SUPFAM" id="SSF75217">
    <property type="entry name" value="alpha/beta knot"/>
    <property type="match status" value="1"/>
</dbReference>
<comment type="function">
    <text evidence="2 3">Specifically methylates the adenosine-1067 in 23S ribosomal RNA. Confers resistance to antibiotic thiostrepton.</text>
</comment>
<comment type="catalytic activity">
    <reaction evidence="2">
        <text>adenosine(1067) in 23S rRNA + S-adenosyl-L-methionine = 2'-O-methyladenosine(1067) in 23S rRNA + S-adenosyl-L-homocysteine + H(+)</text>
        <dbReference type="Rhea" id="RHEA:43212"/>
        <dbReference type="Rhea" id="RHEA-COMP:10409"/>
        <dbReference type="Rhea" id="RHEA-COMP:10410"/>
        <dbReference type="ChEBI" id="CHEBI:15378"/>
        <dbReference type="ChEBI" id="CHEBI:57856"/>
        <dbReference type="ChEBI" id="CHEBI:59789"/>
        <dbReference type="ChEBI" id="CHEBI:74411"/>
        <dbReference type="ChEBI" id="CHEBI:74477"/>
        <dbReference type="EC" id="2.1.1.230"/>
    </reaction>
</comment>
<comment type="biophysicochemical properties">
    <kinetics>
        <KM evidence="3">0.15 mM for S-adenosyl-L-methionine</KM>
    </kinetics>
    <phDependence>
        <text evidence="3">Optimum pH is 7.5-7.6.</text>
    </phDependence>
</comment>
<comment type="subunit">
    <text evidence="1">Homodimer.</text>
</comment>
<comment type="similarity">
    <text evidence="6">Belongs to the class IV-like SAM-binding methyltransferase superfamily. RNA methyltransferase TsnR/AvirB family.</text>
</comment>
<organism>
    <name type="scientific">Streptomyces azureus</name>
    <dbReference type="NCBI Taxonomy" id="146537"/>
    <lineage>
        <taxon>Bacteria</taxon>
        <taxon>Bacillati</taxon>
        <taxon>Actinomycetota</taxon>
        <taxon>Actinomycetes</taxon>
        <taxon>Kitasatosporales</taxon>
        <taxon>Streptomycetaceae</taxon>
        <taxon>Streptomyces</taxon>
    </lineage>
</organism>
<accession>P18644</accession>